<protein>
    <recommendedName>
        <fullName>Lipoprotein NlpI</fullName>
    </recommendedName>
</protein>
<sequence>MKPFLRWCFVATALTLAGCSNTSWRKSEVLAVPLQPTLQQEVILARMEQILASRALTDDERAQLLYERGVLYDSLGLRALARNDFSQALAIRPDMPEVFNYLGIYLTQAGNFDAAYEAFDSVLELDPTYNYAHLNRGIALYYGGRDKLAQDDLLAFYQDDPNDPFRSLWLYLAEQKLDEKQAKEVLKQHFEKSDKEQWGWNIVEFYLGNISEQTLMERLKADATDNTSLAEHLSETNFYLGKYYLSLGDLDSATALFKLAVANNVHNFVEHRYALLELSLLGQDQDDLAESDQQ</sequence>
<proteinExistence type="inferred from homology"/>
<reference key="1">
    <citation type="journal article" date="2008" name="J. Bacteriol.">
        <title>The complete genome sequence of Escherichia coli DH10B: insights into the biology of a laboratory workhorse.</title>
        <authorList>
            <person name="Durfee T."/>
            <person name="Nelson R."/>
            <person name="Baldwin S."/>
            <person name="Plunkett G. III"/>
            <person name="Burland V."/>
            <person name="Mau B."/>
            <person name="Petrosino J.F."/>
            <person name="Qin X."/>
            <person name="Muzny D.M."/>
            <person name="Ayele M."/>
            <person name="Gibbs R.A."/>
            <person name="Csorgo B."/>
            <person name="Posfai G."/>
            <person name="Weinstock G.M."/>
            <person name="Blattner F.R."/>
        </authorList>
    </citation>
    <scope>NUCLEOTIDE SEQUENCE [LARGE SCALE GENOMIC DNA]</scope>
    <source>
        <strain>K12 / DH10B</strain>
    </source>
</reference>
<gene>
    <name type="primary">nlpI</name>
    <name type="ordered locus">ECDH10B_3336</name>
</gene>
<evidence type="ECO:0000250" key="1"/>
<evidence type="ECO:0000255" key="2">
    <source>
        <dbReference type="PROSITE-ProRule" id="PRU00303"/>
    </source>
</evidence>
<accession>B1XGX5</accession>
<organism>
    <name type="scientific">Escherichia coli (strain K12 / DH10B)</name>
    <dbReference type="NCBI Taxonomy" id="316385"/>
    <lineage>
        <taxon>Bacteria</taxon>
        <taxon>Pseudomonadati</taxon>
        <taxon>Pseudomonadota</taxon>
        <taxon>Gammaproteobacteria</taxon>
        <taxon>Enterobacterales</taxon>
        <taxon>Enterobacteriaceae</taxon>
        <taxon>Escherichia</taxon>
    </lineage>
</organism>
<comment type="function">
    <text evidence="1">May be involved in cell division. May play a role in bacterial septation or regulation of cell wall degradation during cell division (By similarity).</text>
</comment>
<comment type="subunit">
    <text evidence="1">Homodimer.</text>
</comment>
<comment type="subcellular location">
    <subcellularLocation>
        <location evidence="2">Cell membrane</location>
        <topology evidence="2">Lipid-anchor</topology>
    </subcellularLocation>
</comment>
<feature type="signal peptide" evidence="2">
    <location>
        <begin position="1"/>
        <end position="18"/>
    </location>
</feature>
<feature type="chain" id="PRO_0000413473" description="Lipoprotein NlpI">
    <location>
        <begin position="19"/>
        <end position="294"/>
    </location>
</feature>
<feature type="repeat" description="TPR 1">
    <location>
        <begin position="62"/>
        <end position="95"/>
    </location>
</feature>
<feature type="repeat" description="TPR 2">
    <location>
        <begin position="96"/>
        <end position="129"/>
    </location>
</feature>
<feature type="repeat" description="TPR 3">
    <location>
        <begin position="234"/>
        <end position="267"/>
    </location>
</feature>
<feature type="lipid moiety-binding region" description="N-palmitoyl cysteine" evidence="2">
    <location>
        <position position="19"/>
    </location>
</feature>
<feature type="lipid moiety-binding region" description="S-diacylglycerol cysteine" evidence="2">
    <location>
        <position position="19"/>
    </location>
</feature>
<name>NLPI_ECODH</name>
<dbReference type="EMBL" id="CP000948">
    <property type="protein sequence ID" value="ACB04242.1"/>
    <property type="molecule type" value="Genomic_DNA"/>
</dbReference>
<dbReference type="RefSeq" id="WP_000802080.1">
    <property type="nucleotide sequence ID" value="NC_010473.1"/>
</dbReference>
<dbReference type="SMR" id="B1XGX5"/>
<dbReference type="GeneID" id="93778820"/>
<dbReference type="KEGG" id="ecd:ECDH10B_3336"/>
<dbReference type="HOGENOM" id="CLU_071600_0_0_6"/>
<dbReference type="GO" id="GO:0005886">
    <property type="term" value="C:plasma membrane"/>
    <property type="evidence" value="ECO:0007669"/>
    <property type="project" value="UniProtKB-SubCell"/>
</dbReference>
<dbReference type="GO" id="GO:0051301">
    <property type="term" value="P:cell division"/>
    <property type="evidence" value="ECO:0007669"/>
    <property type="project" value="UniProtKB-KW"/>
</dbReference>
<dbReference type="FunFam" id="1.25.40.10:FF:000021">
    <property type="entry name" value="Lipoprotein NlpI"/>
    <property type="match status" value="1"/>
</dbReference>
<dbReference type="Gene3D" id="1.25.40.10">
    <property type="entry name" value="Tetratricopeptide repeat domain"/>
    <property type="match status" value="1"/>
</dbReference>
<dbReference type="InterPro" id="IPR023605">
    <property type="entry name" value="Lipoprotein_NlpI"/>
</dbReference>
<dbReference type="InterPro" id="IPR011990">
    <property type="entry name" value="TPR-like_helical_dom_sf"/>
</dbReference>
<dbReference type="InterPro" id="IPR019734">
    <property type="entry name" value="TPR_rpt"/>
</dbReference>
<dbReference type="InterPro" id="IPR050498">
    <property type="entry name" value="Ycf3"/>
</dbReference>
<dbReference type="NCBIfam" id="NF008391">
    <property type="entry name" value="PRK11189.1"/>
    <property type="match status" value="1"/>
</dbReference>
<dbReference type="PANTHER" id="PTHR44858">
    <property type="entry name" value="TETRATRICOPEPTIDE REPEAT PROTEIN 6"/>
    <property type="match status" value="1"/>
</dbReference>
<dbReference type="PANTHER" id="PTHR44858:SF1">
    <property type="entry name" value="UDP-N-ACETYLGLUCOSAMINE--PEPTIDE N-ACETYLGLUCOSAMINYLTRANSFERASE SPINDLY-RELATED"/>
    <property type="match status" value="1"/>
</dbReference>
<dbReference type="Pfam" id="PF13432">
    <property type="entry name" value="TPR_16"/>
    <property type="match status" value="1"/>
</dbReference>
<dbReference type="PIRSF" id="PIRSF004654">
    <property type="entry name" value="NlpI"/>
    <property type="match status" value="1"/>
</dbReference>
<dbReference type="SMART" id="SM00028">
    <property type="entry name" value="TPR"/>
    <property type="match status" value="3"/>
</dbReference>
<dbReference type="SUPFAM" id="SSF48452">
    <property type="entry name" value="TPR-like"/>
    <property type="match status" value="1"/>
</dbReference>
<dbReference type="PROSITE" id="PS51257">
    <property type="entry name" value="PROKAR_LIPOPROTEIN"/>
    <property type="match status" value="1"/>
</dbReference>
<dbReference type="PROSITE" id="PS50005">
    <property type="entry name" value="TPR"/>
    <property type="match status" value="3"/>
</dbReference>
<dbReference type="PROSITE" id="PS50293">
    <property type="entry name" value="TPR_REGION"/>
    <property type="match status" value="2"/>
</dbReference>
<keyword id="KW-0131">Cell cycle</keyword>
<keyword id="KW-0132">Cell division</keyword>
<keyword id="KW-1003">Cell membrane</keyword>
<keyword id="KW-0449">Lipoprotein</keyword>
<keyword id="KW-0472">Membrane</keyword>
<keyword id="KW-0564">Palmitate</keyword>
<keyword id="KW-0677">Repeat</keyword>
<keyword id="KW-0732">Signal</keyword>
<keyword id="KW-0802">TPR repeat</keyword>